<comment type="function">
    <text evidence="1">Cell wall formation.</text>
</comment>
<comment type="catalytic activity">
    <reaction evidence="1">
        <text>UDP-N-acetyl-alpha-D-muramate + L-alanine + ATP = UDP-N-acetyl-alpha-D-muramoyl-L-alanine + ADP + phosphate + H(+)</text>
        <dbReference type="Rhea" id="RHEA:23372"/>
        <dbReference type="ChEBI" id="CHEBI:15378"/>
        <dbReference type="ChEBI" id="CHEBI:30616"/>
        <dbReference type="ChEBI" id="CHEBI:43474"/>
        <dbReference type="ChEBI" id="CHEBI:57972"/>
        <dbReference type="ChEBI" id="CHEBI:70757"/>
        <dbReference type="ChEBI" id="CHEBI:83898"/>
        <dbReference type="ChEBI" id="CHEBI:456216"/>
        <dbReference type="EC" id="6.3.2.8"/>
    </reaction>
</comment>
<comment type="pathway">
    <text evidence="1">Cell wall biogenesis; peptidoglycan biosynthesis.</text>
</comment>
<comment type="subcellular location">
    <subcellularLocation>
        <location evidence="1">Cytoplasm</location>
    </subcellularLocation>
</comment>
<comment type="similarity">
    <text evidence="1">Belongs to the MurCDEF family.</text>
</comment>
<sequence length="478" mass="52297">MKTVKKVNFNGQPFHFIGIGGIGMSALAYILAERNLPVSGSDLRPTHITQRLQGAGAHIFHRQEANNLALFHSPGPQNSSQTVPQVICSTAINDHNKEYQAARDLGYPIFHRSDVLAALIADYDSIAVAGTHGKTTTSSLIGYVLLEAGLDPTIIVGGEVDAWEGNARLGQGRFLVAEADESDGSLTKHAPKIGVITNIELDHPDHYQNLSEVIDTFHEFAHQCQILVACLDCDTIAEHFRPTISYSLDPEKGADYTVSEIIYEQGMMKASVWEKGSYLGQMEVKIPGQHNISNALAVVAIGRYLGLEFAVIADAIATFAGAKRRFEHKGEANGITFIDDYAHHPSELLATLAAAKLKVEGKQYQRSIAIFQPHRYSRTTAFLEEFGSAFSSADVVVLTDIYSAGEVNINHVTGQQVAEQVRKHHKNAYYHPELSSLGQFLLEILQPGDLALFLGAGNLNQVIPEMLSLYREQLAVRV</sequence>
<gene>
    <name evidence="1" type="primary">murC</name>
    <name type="ordered locus">MAE_25040</name>
</gene>
<accession>B0JHH4</accession>
<protein>
    <recommendedName>
        <fullName evidence="1">UDP-N-acetylmuramate--L-alanine ligase</fullName>
        <ecNumber evidence="1">6.3.2.8</ecNumber>
    </recommendedName>
    <alternativeName>
        <fullName evidence="1">UDP-N-acetylmuramoyl-L-alanine synthetase</fullName>
    </alternativeName>
</protein>
<evidence type="ECO:0000255" key="1">
    <source>
        <dbReference type="HAMAP-Rule" id="MF_00046"/>
    </source>
</evidence>
<name>MURC_MICAN</name>
<dbReference type="EC" id="6.3.2.8" evidence="1"/>
<dbReference type="EMBL" id="AP009552">
    <property type="protein sequence ID" value="BAG02326.1"/>
    <property type="molecule type" value="Genomic_DNA"/>
</dbReference>
<dbReference type="SMR" id="B0JHH4"/>
<dbReference type="STRING" id="449447.MAE_25040"/>
<dbReference type="PaxDb" id="449447-MAE_25040"/>
<dbReference type="EnsemblBacteria" id="BAG02326">
    <property type="protein sequence ID" value="BAG02326"/>
    <property type="gene ID" value="MAE_25040"/>
</dbReference>
<dbReference type="KEGG" id="mar:MAE_25040"/>
<dbReference type="eggNOG" id="COG0773">
    <property type="taxonomic scope" value="Bacteria"/>
</dbReference>
<dbReference type="HOGENOM" id="CLU_028104_2_2_3"/>
<dbReference type="UniPathway" id="UPA00219"/>
<dbReference type="Proteomes" id="UP000001510">
    <property type="component" value="Chromosome"/>
</dbReference>
<dbReference type="GO" id="GO:0005737">
    <property type="term" value="C:cytoplasm"/>
    <property type="evidence" value="ECO:0007669"/>
    <property type="project" value="UniProtKB-SubCell"/>
</dbReference>
<dbReference type="GO" id="GO:0005524">
    <property type="term" value="F:ATP binding"/>
    <property type="evidence" value="ECO:0007669"/>
    <property type="project" value="UniProtKB-UniRule"/>
</dbReference>
<dbReference type="GO" id="GO:0008763">
    <property type="term" value="F:UDP-N-acetylmuramate-L-alanine ligase activity"/>
    <property type="evidence" value="ECO:0007669"/>
    <property type="project" value="UniProtKB-UniRule"/>
</dbReference>
<dbReference type="GO" id="GO:0051301">
    <property type="term" value="P:cell division"/>
    <property type="evidence" value="ECO:0007669"/>
    <property type="project" value="UniProtKB-KW"/>
</dbReference>
<dbReference type="GO" id="GO:0071555">
    <property type="term" value="P:cell wall organization"/>
    <property type="evidence" value="ECO:0007669"/>
    <property type="project" value="UniProtKB-KW"/>
</dbReference>
<dbReference type="GO" id="GO:0009252">
    <property type="term" value="P:peptidoglycan biosynthetic process"/>
    <property type="evidence" value="ECO:0007669"/>
    <property type="project" value="UniProtKB-UniRule"/>
</dbReference>
<dbReference type="GO" id="GO:0008360">
    <property type="term" value="P:regulation of cell shape"/>
    <property type="evidence" value="ECO:0007669"/>
    <property type="project" value="UniProtKB-KW"/>
</dbReference>
<dbReference type="Gene3D" id="3.90.190.20">
    <property type="entry name" value="Mur ligase, C-terminal domain"/>
    <property type="match status" value="1"/>
</dbReference>
<dbReference type="Gene3D" id="3.40.1190.10">
    <property type="entry name" value="Mur-like, catalytic domain"/>
    <property type="match status" value="1"/>
</dbReference>
<dbReference type="Gene3D" id="3.40.50.720">
    <property type="entry name" value="NAD(P)-binding Rossmann-like Domain"/>
    <property type="match status" value="1"/>
</dbReference>
<dbReference type="HAMAP" id="MF_00046">
    <property type="entry name" value="MurC"/>
    <property type="match status" value="1"/>
</dbReference>
<dbReference type="InterPro" id="IPR036565">
    <property type="entry name" value="Mur-like_cat_sf"/>
</dbReference>
<dbReference type="InterPro" id="IPR004101">
    <property type="entry name" value="Mur_ligase_C"/>
</dbReference>
<dbReference type="InterPro" id="IPR036615">
    <property type="entry name" value="Mur_ligase_C_dom_sf"/>
</dbReference>
<dbReference type="InterPro" id="IPR013221">
    <property type="entry name" value="Mur_ligase_cen"/>
</dbReference>
<dbReference type="InterPro" id="IPR000713">
    <property type="entry name" value="Mur_ligase_N"/>
</dbReference>
<dbReference type="InterPro" id="IPR050061">
    <property type="entry name" value="MurCDEF_pg_biosynth"/>
</dbReference>
<dbReference type="InterPro" id="IPR005758">
    <property type="entry name" value="UDP-N-AcMur_Ala_ligase_MurC"/>
</dbReference>
<dbReference type="NCBIfam" id="TIGR01082">
    <property type="entry name" value="murC"/>
    <property type="match status" value="1"/>
</dbReference>
<dbReference type="PANTHER" id="PTHR43445:SF3">
    <property type="entry name" value="UDP-N-ACETYLMURAMATE--L-ALANINE LIGASE"/>
    <property type="match status" value="1"/>
</dbReference>
<dbReference type="PANTHER" id="PTHR43445">
    <property type="entry name" value="UDP-N-ACETYLMURAMATE--L-ALANINE LIGASE-RELATED"/>
    <property type="match status" value="1"/>
</dbReference>
<dbReference type="Pfam" id="PF01225">
    <property type="entry name" value="Mur_ligase"/>
    <property type="match status" value="1"/>
</dbReference>
<dbReference type="Pfam" id="PF02875">
    <property type="entry name" value="Mur_ligase_C"/>
    <property type="match status" value="1"/>
</dbReference>
<dbReference type="Pfam" id="PF08245">
    <property type="entry name" value="Mur_ligase_M"/>
    <property type="match status" value="1"/>
</dbReference>
<dbReference type="SUPFAM" id="SSF51984">
    <property type="entry name" value="MurCD N-terminal domain"/>
    <property type="match status" value="1"/>
</dbReference>
<dbReference type="SUPFAM" id="SSF53623">
    <property type="entry name" value="MurD-like peptide ligases, catalytic domain"/>
    <property type="match status" value="1"/>
</dbReference>
<dbReference type="SUPFAM" id="SSF53244">
    <property type="entry name" value="MurD-like peptide ligases, peptide-binding domain"/>
    <property type="match status" value="1"/>
</dbReference>
<proteinExistence type="inferred from homology"/>
<feature type="chain" id="PRO_0000336843" description="UDP-N-acetylmuramate--L-alanine ligase">
    <location>
        <begin position="1"/>
        <end position="478"/>
    </location>
</feature>
<feature type="binding site" evidence="1">
    <location>
        <begin position="130"/>
        <end position="136"/>
    </location>
    <ligand>
        <name>ATP</name>
        <dbReference type="ChEBI" id="CHEBI:30616"/>
    </ligand>
</feature>
<keyword id="KW-0067">ATP-binding</keyword>
<keyword id="KW-0131">Cell cycle</keyword>
<keyword id="KW-0132">Cell division</keyword>
<keyword id="KW-0133">Cell shape</keyword>
<keyword id="KW-0961">Cell wall biogenesis/degradation</keyword>
<keyword id="KW-0963">Cytoplasm</keyword>
<keyword id="KW-0436">Ligase</keyword>
<keyword id="KW-0547">Nucleotide-binding</keyword>
<keyword id="KW-0573">Peptidoglycan synthesis</keyword>
<organism>
    <name type="scientific">Microcystis aeruginosa (strain NIES-843 / IAM M-2473)</name>
    <dbReference type="NCBI Taxonomy" id="449447"/>
    <lineage>
        <taxon>Bacteria</taxon>
        <taxon>Bacillati</taxon>
        <taxon>Cyanobacteriota</taxon>
        <taxon>Cyanophyceae</taxon>
        <taxon>Oscillatoriophycideae</taxon>
        <taxon>Chroococcales</taxon>
        <taxon>Microcystaceae</taxon>
        <taxon>Microcystis</taxon>
    </lineage>
</organism>
<reference key="1">
    <citation type="journal article" date="2007" name="DNA Res.">
        <title>Complete genomic structure of the bloom-forming toxic cyanobacterium Microcystis aeruginosa NIES-843.</title>
        <authorList>
            <person name="Kaneko T."/>
            <person name="Nakajima N."/>
            <person name="Okamoto S."/>
            <person name="Suzuki I."/>
            <person name="Tanabe Y."/>
            <person name="Tamaoki M."/>
            <person name="Nakamura Y."/>
            <person name="Kasai F."/>
            <person name="Watanabe A."/>
            <person name="Kawashima K."/>
            <person name="Kishida Y."/>
            <person name="Ono A."/>
            <person name="Shimizu Y."/>
            <person name="Takahashi C."/>
            <person name="Minami C."/>
            <person name="Fujishiro T."/>
            <person name="Kohara M."/>
            <person name="Katoh M."/>
            <person name="Nakazaki N."/>
            <person name="Nakayama S."/>
            <person name="Yamada M."/>
            <person name="Tabata S."/>
            <person name="Watanabe M.M."/>
        </authorList>
    </citation>
    <scope>NUCLEOTIDE SEQUENCE [LARGE SCALE GENOMIC DNA]</scope>
    <source>
        <strain>NIES-843 / IAM M-247</strain>
    </source>
</reference>